<evidence type="ECO:0000250" key="1">
    <source>
        <dbReference type="UniProtKB" id="Q03067"/>
    </source>
</evidence>
<evidence type="ECO:0000255" key="2">
    <source>
        <dbReference type="HAMAP-Rule" id="MF_03047"/>
    </source>
</evidence>
<evidence type="ECO:0000269" key="3">
    <source>
    </source>
</evidence>
<dbReference type="EMBL" id="CU329670">
    <property type="protein sequence ID" value="CAI46282.1"/>
    <property type="molecule type" value="Genomic_DNA"/>
</dbReference>
<dbReference type="RefSeq" id="NP_001018231.1">
    <property type="nucleotide sequence ID" value="NM_001018740.2"/>
</dbReference>
<dbReference type="SMR" id="Q5FC18"/>
<dbReference type="BioGRID" id="280473">
    <property type="interactions" value="7"/>
</dbReference>
<dbReference type="FunCoup" id="Q5FC18">
    <property type="interactions" value="22"/>
</dbReference>
<dbReference type="IntAct" id="Q5FC18">
    <property type="interactions" value="2"/>
</dbReference>
<dbReference type="MINT" id="Q5FC18"/>
<dbReference type="STRING" id="284812.Q5FC18"/>
<dbReference type="SwissPalm" id="Q5FC18"/>
<dbReference type="PaxDb" id="4896-SPAC57A10.14.1"/>
<dbReference type="EnsemblFungi" id="SPAC57A10.14.1">
    <property type="protein sequence ID" value="SPAC57A10.14.1:pep"/>
    <property type="gene ID" value="SPAC57A10.14"/>
</dbReference>
<dbReference type="PomBase" id="SPAC57A10.14">
    <property type="gene designation" value="sgf11"/>
</dbReference>
<dbReference type="VEuPathDB" id="FungiDB:SPAC57A10.14"/>
<dbReference type="eggNOG" id="ENOG502RAWA">
    <property type="taxonomic scope" value="Eukaryota"/>
</dbReference>
<dbReference type="HOGENOM" id="CLU_1928800_0_0_1"/>
<dbReference type="InParanoid" id="Q5FC18"/>
<dbReference type="OMA" id="DYTHELT"/>
<dbReference type="PRO" id="PR:Q5FC18"/>
<dbReference type="Proteomes" id="UP000002485">
    <property type="component" value="Chromosome I"/>
</dbReference>
<dbReference type="GO" id="GO:0071819">
    <property type="term" value="C:DUBm complex"/>
    <property type="evidence" value="ECO:0007669"/>
    <property type="project" value="UniProtKB-UniRule"/>
</dbReference>
<dbReference type="GO" id="GO:0000124">
    <property type="term" value="C:SAGA complex"/>
    <property type="evidence" value="ECO:0000314"/>
    <property type="project" value="PomBase"/>
</dbReference>
<dbReference type="GO" id="GO:0003713">
    <property type="term" value="F:transcription coactivator activity"/>
    <property type="evidence" value="ECO:0007669"/>
    <property type="project" value="UniProtKB-UniRule"/>
</dbReference>
<dbReference type="GO" id="GO:0008270">
    <property type="term" value="F:zinc ion binding"/>
    <property type="evidence" value="ECO:0007669"/>
    <property type="project" value="UniProtKB-UniRule"/>
</dbReference>
<dbReference type="GO" id="GO:0006357">
    <property type="term" value="P:regulation of transcription by RNA polymerase II"/>
    <property type="evidence" value="ECO:0000269"/>
    <property type="project" value="PomBase"/>
</dbReference>
<dbReference type="GO" id="GO:0045815">
    <property type="term" value="P:transcription initiation-coupled chromatin remodeling"/>
    <property type="evidence" value="ECO:0000305"/>
    <property type="project" value="PomBase"/>
</dbReference>
<dbReference type="Gene3D" id="3.30.160.60">
    <property type="entry name" value="Classic Zinc Finger"/>
    <property type="match status" value="1"/>
</dbReference>
<dbReference type="HAMAP" id="MF_03047">
    <property type="entry name" value="Sgf11"/>
    <property type="match status" value="1"/>
</dbReference>
<dbReference type="InterPro" id="IPR013246">
    <property type="entry name" value="SAGA_su_Sgf11"/>
</dbReference>
<dbReference type="InterPro" id="IPR051078">
    <property type="entry name" value="SGF11"/>
</dbReference>
<dbReference type="PANTHER" id="PTHR46367">
    <property type="entry name" value="ATAXIN-7-LIKE PROTEIN 3"/>
    <property type="match status" value="1"/>
</dbReference>
<dbReference type="PANTHER" id="PTHR46367:SF1">
    <property type="entry name" value="ATAXIN-7-LIKE PROTEIN 3"/>
    <property type="match status" value="1"/>
</dbReference>
<dbReference type="Pfam" id="PF08209">
    <property type="entry name" value="Sgf11"/>
    <property type="match status" value="1"/>
</dbReference>
<comment type="function">
    <text evidence="1">Component of the transcription coactivator SAGA complex. SAGA acts as a general cofactor required for essentially all RNA polymerase II transcription. At the promoters, SAGA is required for transcription pre-initiation complex (PIC) recruitment. It influences RNA polymerase II transcriptional activity through different activities such as TBP interaction (via core/TAF module) and promoter selectivity, interaction with transcription activators (via Tra1/SPT module), and chromatin modification through histone acetylation (via HAT module) and deubiquitination (via DUB module). SAGA preferentially acetylates histones H3 (to form H3K9ac, H3K14ac, H3K18ac and H3K23ac) and H2B and deubiquitinates histone H2B. SAGA interacts with DNA via upstream activating sequences (UASs). Within the DUB module, the correctly positioned zinc finger domains of sgf11 and sgf73 are both required to fully activate the ubiquitin hydrolase ubp8. Deubiquitination of H2B is required for the maintenance of steady-state H3 methylation levels. sgf11 is required to recruit ubp8 and sus1 into the SAGA complex.</text>
</comment>
<comment type="subunit">
    <text evidence="1 3">Component of the 1.8 MDa SAGA (Spt-Ada-Gcn5 acetyltransferase) complex, which is composed of 19 subunits tra1, spt7, taf5, ngg1/ada3, sgf73, spt20, spt8, taf12, taf6, hfi1/ada1, ubp8, gcn5, ada2, spt3, sgf29, taf10, taf9, sgf11 and sus1 (PubMed:19056896). The SAGA complex is composed of 4 modules, namely the HAT (histone acetyltransferase) module (gcn5, ada2, ngg1/ada3 and sgf29), the DUB (deubiquitinating) module (ubp8, sgf11, sgf73 and sus1), the core or TAF (TBP-associated factor) module (taf5, taf6, taf9, taf10 and taf12), and the Tra1 or SPT (Suppressor of Ty) module (tra1, hfi1/ada1, spt3, spt7, spt8 and spt20). The Tra1/SPT module binds activators, the core module recruits TBP (TATA-binding protein), the HAT module contains the histone H3 acetyltransferase gcn5, and the DUB module comprises the histone H2B deubiquitinase ubp8 (By similarity). Interacts directly with sgf73, sus1 and ubp8 (By similarity).</text>
</comment>
<comment type="subcellular location">
    <subcellularLocation>
        <location evidence="1 2">Nucleus</location>
    </subcellularLocation>
</comment>
<comment type="domain">
    <text evidence="2">The long N-terminal helix forms part of the 'assembly lobe' of the SAGA deubiquitination module.</text>
</comment>
<comment type="domain">
    <text evidence="2">The C-terminal SGF11-type zinc-finger domain together with the C-terminal catalytic domain of UBP8 forms the 'catalytic lobe' of the SAGA deubiquitination module.</text>
</comment>
<comment type="similarity">
    <text evidence="2">Belongs to the SGF11 family.</text>
</comment>
<organism>
    <name type="scientific">Schizosaccharomyces pombe (strain 972 / ATCC 24843)</name>
    <name type="common">Fission yeast</name>
    <dbReference type="NCBI Taxonomy" id="284812"/>
    <lineage>
        <taxon>Eukaryota</taxon>
        <taxon>Fungi</taxon>
        <taxon>Dikarya</taxon>
        <taxon>Ascomycota</taxon>
        <taxon>Taphrinomycotina</taxon>
        <taxon>Schizosaccharomycetes</taxon>
        <taxon>Schizosaccharomycetales</taxon>
        <taxon>Schizosaccharomycetaceae</taxon>
        <taxon>Schizosaccharomyces</taxon>
    </lineage>
</organism>
<feature type="chain" id="PRO_0000337264" description="SAGA complex subunit Sgf11">
    <location>
        <begin position="1"/>
        <end position="117"/>
    </location>
</feature>
<feature type="zinc finger region" description="SGF11-type" evidence="2">
    <location>
        <begin position="72"/>
        <end position="93"/>
    </location>
</feature>
<feature type="binding site" evidence="1">
    <location>
        <position position="74"/>
    </location>
    <ligand>
        <name>Zn(2+)</name>
        <dbReference type="ChEBI" id="CHEBI:29105"/>
    </ligand>
</feature>
<feature type="binding site" evidence="1">
    <location>
        <position position="77"/>
    </location>
    <ligand>
        <name>Zn(2+)</name>
        <dbReference type="ChEBI" id="CHEBI:29105"/>
    </ligand>
</feature>
<feature type="binding site" evidence="1">
    <location>
        <position position="89"/>
    </location>
    <ligand>
        <name>Zn(2+)</name>
        <dbReference type="ChEBI" id="CHEBI:29105"/>
    </ligand>
</feature>
<feature type="binding site" evidence="1">
    <location>
        <position position="93"/>
    </location>
    <ligand>
        <name>Zn(2+)</name>
        <dbReference type="ChEBI" id="CHEBI:29105"/>
    </ligand>
</feature>
<reference key="1">
    <citation type="journal article" date="2002" name="Nature">
        <title>The genome sequence of Schizosaccharomyces pombe.</title>
        <authorList>
            <person name="Wood V."/>
            <person name="Gwilliam R."/>
            <person name="Rajandream M.A."/>
            <person name="Lyne M.H."/>
            <person name="Lyne R."/>
            <person name="Stewart A."/>
            <person name="Sgouros J.G."/>
            <person name="Peat N."/>
            <person name="Hayles J."/>
            <person name="Baker S.G."/>
            <person name="Basham D."/>
            <person name="Bowman S."/>
            <person name="Brooks K."/>
            <person name="Brown D."/>
            <person name="Brown S."/>
            <person name="Chillingworth T."/>
            <person name="Churcher C.M."/>
            <person name="Collins M."/>
            <person name="Connor R."/>
            <person name="Cronin A."/>
            <person name="Davis P."/>
            <person name="Feltwell T."/>
            <person name="Fraser A."/>
            <person name="Gentles S."/>
            <person name="Goble A."/>
            <person name="Hamlin N."/>
            <person name="Harris D.E."/>
            <person name="Hidalgo J."/>
            <person name="Hodgson G."/>
            <person name="Holroyd S."/>
            <person name="Hornsby T."/>
            <person name="Howarth S."/>
            <person name="Huckle E.J."/>
            <person name="Hunt S."/>
            <person name="Jagels K."/>
            <person name="James K.D."/>
            <person name="Jones L."/>
            <person name="Jones M."/>
            <person name="Leather S."/>
            <person name="McDonald S."/>
            <person name="McLean J."/>
            <person name="Mooney P."/>
            <person name="Moule S."/>
            <person name="Mungall K.L."/>
            <person name="Murphy L.D."/>
            <person name="Niblett D."/>
            <person name="Odell C."/>
            <person name="Oliver K."/>
            <person name="O'Neil S."/>
            <person name="Pearson D."/>
            <person name="Quail M.A."/>
            <person name="Rabbinowitsch E."/>
            <person name="Rutherford K.M."/>
            <person name="Rutter S."/>
            <person name="Saunders D."/>
            <person name="Seeger K."/>
            <person name="Sharp S."/>
            <person name="Skelton J."/>
            <person name="Simmonds M.N."/>
            <person name="Squares R."/>
            <person name="Squares S."/>
            <person name="Stevens K."/>
            <person name="Taylor K."/>
            <person name="Taylor R.G."/>
            <person name="Tivey A."/>
            <person name="Walsh S.V."/>
            <person name="Warren T."/>
            <person name="Whitehead S."/>
            <person name="Woodward J.R."/>
            <person name="Volckaert G."/>
            <person name="Aert R."/>
            <person name="Robben J."/>
            <person name="Grymonprez B."/>
            <person name="Weltjens I."/>
            <person name="Vanstreels E."/>
            <person name="Rieger M."/>
            <person name="Schaefer M."/>
            <person name="Mueller-Auer S."/>
            <person name="Gabel C."/>
            <person name="Fuchs M."/>
            <person name="Duesterhoeft A."/>
            <person name="Fritzc C."/>
            <person name="Holzer E."/>
            <person name="Moestl D."/>
            <person name="Hilbert H."/>
            <person name="Borzym K."/>
            <person name="Langer I."/>
            <person name="Beck A."/>
            <person name="Lehrach H."/>
            <person name="Reinhardt R."/>
            <person name="Pohl T.M."/>
            <person name="Eger P."/>
            <person name="Zimmermann W."/>
            <person name="Wedler H."/>
            <person name="Wambutt R."/>
            <person name="Purnelle B."/>
            <person name="Goffeau A."/>
            <person name="Cadieu E."/>
            <person name="Dreano S."/>
            <person name="Gloux S."/>
            <person name="Lelaure V."/>
            <person name="Mottier S."/>
            <person name="Galibert F."/>
            <person name="Aves S.J."/>
            <person name="Xiang Z."/>
            <person name="Hunt C."/>
            <person name="Moore K."/>
            <person name="Hurst S.M."/>
            <person name="Lucas M."/>
            <person name="Rochet M."/>
            <person name="Gaillardin C."/>
            <person name="Tallada V.A."/>
            <person name="Garzon A."/>
            <person name="Thode G."/>
            <person name="Daga R.R."/>
            <person name="Cruzado L."/>
            <person name="Jimenez J."/>
            <person name="Sanchez M."/>
            <person name="del Rey F."/>
            <person name="Benito J."/>
            <person name="Dominguez A."/>
            <person name="Revuelta J.L."/>
            <person name="Moreno S."/>
            <person name="Armstrong J."/>
            <person name="Forsburg S.L."/>
            <person name="Cerutti L."/>
            <person name="Lowe T."/>
            <person name="McCombie W.R."/>
            <person name="Paulsen I."/>
            <person name="Potashkin J."/>
            <person name="Shpakovski G.V."/>
            <person name="Ussery D."/>
            <person name="Barrell B.G."/>
            <person name="Nurse P."/>
        </authorList>
    </citation>
    <scope>NUCLEOTIDE SEQUENCE [LARGE SCALE GENOMIC DNA]</scope>
    <source>
        <strain>972 / ATCC 24843</strain>
    </source>
</reference>
<reference key="2">
    <citation type="journal article" date="2008" name="Genes Dev.">
        <title>The S. pombe SAGA complex controls the switch from proliferation to sexual differentiation through the opposing roles of its subunits Gcn5 and Spt8.</title>
        <authorList>
            <person name="Helmlinger D."/>
            <person name="Marguerat S."/>
            <person name="Villen J."/>
            <person name="Gygi S.P."/>
            <person name="Bahler J."/>
            <person name="Winston F."/>
        </authorList>
    </citation>
    <scope>IDENTIFICATION IN THE SAGA COMPLEX</scope>
    <scope>IDENTIFICATION BY MASS SPECTROMETRY</scope>
</reference>
<protein>
    <recommendedName>
        <fullName>SAGA complex subunit Sgf11</fullName>
    </recommendedName>
    <alternativeName>
        <fullName evidence="2">SAGA-associated factor 11</fullName>
    </alternativeName>
</protein>
<sequence>MQPASLAGISCTIFENLLKDYTHELTQTVHKNAKLSLQKCPACNKHCRQYCTKPGYDIYGNSVQTPSNVPYYSCLMCKREIAASRYAAHLEKCKGRSLSNATSYSTLFEDDNADEED</sequence>
<gene>
    <name type="primary">sgf11</name>
    <name type="ORF">SPAC57A10.14</name>
</gene>
<accession>Q5FC18</accession>
<proteinExistence type="evidence at protein level"/>
<keyword id="KW-0010">Activator</keyword>
<keyword id="KW-0156">Chromatin regulator</keyword>
<keyword id="KW-0479">Metal-binding</keyword>
<keyword id="KW-0539">Nucleus</keyword>
<keyword id="KW-1185">Reference proteome</keyword>
<keyword id="KW-0804">Transcription</keyword>
<keyword id="KW-0805">Transcription regulation</keyword>
<keyword id="KW-0862">Zinc</keyword>
<keyword id="KW-0863">Zinc-finger</keyword>
<name>SGF11_SCHPO</name>